<keyword id="KW-0687">Ribonucleoprotein</keyword>
<keyword id="KW-0689">Ribosomal protein</keyword>
<accession>A0K9S6</accession>
<organism>
    <name type="scientific">Burkholderia cenocepacia (strain HI2424)</name>
    <dbReference type="NCBI Taxonomy" id="331272"/>
    <lineage>
        <taxon>Bacteria</taxon>
        <taxon>Pseudomonadati</taxon>
        <taxon>Pseudomonadota</taxon>
        <taxon>Betaproteobacteria</taxon>
        <taxon>Burkholderiales</taxon>
        <taxon>Burkholderiaceae</taxon>
        <taxon>Burkholderia</taxon>
        <taxon>Burkholderia cepacia complex</taxon>
    </lineage>
</organism>
<feature type="chain" id="PRO_1000115104" description="Large ribosomal subunit protein bL33">
    <location>
        <begin position="1"/>
        <end position="55"/>
    </location>
</feature>
<gene>
    <name evidence="1" type="primary">rpmG</name>
    <name type="ordered locus">Bcen2424_2503</name>
</gene>
<evidence type="ECO:0000255" key="1">
    <source>
        <dbReference type="HAMAP-Rule" id="MF_00294"/>
    </source>
</evidence>
<evidence type="ECO:0000305" key="2"/>
<proteinExistence type="inferred from homology"/>
<reference key="1">
    <citation type="submission" date="2006-08" db="EMBL/GenBank/DDBJ databases">
        <title>Complete sequence of chromosome 1 of Burkholderia cenocepacia HI2424.</title>
        <authorList>
            <person name="Copeland A."/>
            <person name="Lucas S."/>
            <person name="Lapidus A."/>
            <person name="Barry K."/>
            <person name="Detter J.C."/>
            <person name="Glavina del Rio T."/>
            <person name="Hammon N."/>
            <person name="Israni S."/>
            <person name="Pitluck S."/>
            <person name="Chain P."/>
            <person name="Malfatti S."/>
            <person name="Shin M."/>
            <person name="Vergez L."/>
            <person name="Schmutz J."/>
            <person name="Larimer F."/>
            <person name="Land M."/>
            <person name="Hauser L."/>
            <person name="Kyrpides N."/>
            <person name="Kim E."/>
            <person name="LiPuma J.J."/>
            <person name="Gonzalez C.F."/>
            <person name="Konstantinidis K."/>
            <person name="Tiedje J.M."/>
            <person name="Richardson P."/>
        </authorList>
    </citation>
    <scope>NUCLEOTIDE SEQUENCE [LARGE SCALE GENOMIC DNA]</scope>
    <source>
        <strain>HI2424</strain>
    </source>
</reference>
<dbReference type="EMBL" id="CP000458">
    <property type="protein sequence ID" value="ABK09253.1"/>
    <property type="molecule type" value="Genomic_DNA"/>
</dbReference>
<dbReference type="RefSeq" id="WP_006478046.1">
    <property type="nucleotide sequence ID" value="NC_008542.1"/>
</dbReference>
<dbReference type="SMR" id="A0K9S6"/>
<dbReference type="GeneID" id="98107655"/>
<dbReference type="KEGG" id="bch:Bcen2424_2503"/>
<dbReference type="HOGENOM" id="CLU_190949_1_1_4"/>
<dbReference type="GO" id="GO:0022625">
    <property type="term" value="C:cytosolic large ribosomal subunit"/>
    <property type="evidence" value="ECO:0007669"/>
    <property type="project" value="TreeGrafter"/>
</dbReference>
<dbReference type="GO" id="GO:0003735">
    <property type="term" value="F:structural constituent of ribosome"/>
    <property type="evidence" value="ECO:0007669"/>
    <property type="project" value="InterPro"/>
</dbReference>
<dbReference type="GO" id="GO:0006412">
    <property type="term" value="P:translation"/>
    <property type="evidence" value="ECO:0007669"/>
    <property type="project" value="UniProtKB-UniRule"/>
</dbReference>
<dbReference type="FunFam" id="2.20.28.120:FF:000001">
    <property type="entry name" value="50S ribosomal protein L33"/>
    <property type="match status" value="1"/>
</dbReference>
<dbReference type="Gene3D" id="2.20.28.120">
    <property type="entry name" value="Ribosomal protein L33"/>
    <property type="match status" value="1"/>
</dbReference>
<dbReference type="HAMAP" id="MF_00294">
    <property type="entry name" value="Ribosomal_bL33"/>
    <property type="match status" value="1"/>
</dbReference>
<dbReference type="InterPro" id="IPR001705">
    <property type="entry name" value="Ribosomal_bL33"/>
</dbReference>
<dbReference type="InterPro" id="IPR018264">
    <property type="entry name" value="Ribosomal_bL33_CS"/>
</dbReference>
<dbReference type="InterPro" id="IPR038584">
    <property type="entry name" value="Ribosomal_bL33_sf"/>
</dbReference>
<dbReference type="InterPro" id="IPR011332">
    <property type="entry name" value="Ribosomal_zn-bd"/>
</dbReference>
<dbReference type="NCBIfam" id="NF001860">
    <property type="entry name" value="PRK00595.1"/>
    <property type="match status" value="1"/>
</dbReference>
<dbReference type="NCBIfam" id="TIGR01023">
    <property type="entry name" value="rpmG_bact"/>
    <property type="match status" value="1"/>
</dbReference>
<dbReference type="PANTHER" id="PTHR15238">
    <property type="entry name" value="54S RIBOSOMAL PROTEIN L39, MITOCHONDRIAL"/>
    <property type="match status" value="1"/>
</dbReference>
<dbReference type="PANTHER" id="PTHR15238:SF1">
    <property type="entry name" value="LARGE RIBOSOMAL SUBUNIT PROTEIN BL33M"/>
    <property type="match status" value="1"/>
</dbReference>
<dbReference type="Pfam" id="PF00471">
    <property type="entry name" value="Ribosomal_L33"/>
    <property type="match status" value="1"/>
</dbReference>
<dbReference type="SUPFAM" id="SSF57829">
    <property type="entry name" value="Zn-binding ribosomal proteins"/>
    <property type="match status" value="1"/>
</dbReference>
<dbReference type="PROSITE" id="PS00582">
    <property type="entry name" value="RIBOSOMAL_L33"/>
    <property type="match status" value="1"/>
</dbReference>
<sequence length="55" mass="6382">MAKGARDKIKLESTAGTGHFYTTTKNKRNMPEKMAIKKFDPVVRKHVEYKETKIK</sequence>
<protein>
    <recommendedName>
        <fullName evidence="1">Large ribosomal subunit protein bL33</fullName>
    </recommendedName>
    <alternativeName>
        <fullName evidence="2">50S ribosomal protein L33</fullName>
    </alternativeName>
</protein>
<comment type="similarity">
    <text evidence="1">Belongs to the bacterial ribosomal protein bL33 family.</text>
</comment>
<name>RL33_BURCH</name>